<dbReference type="EC" id="3.1.1.61" evidence="1"/>
<dbReference type="EC" id="3.5.1.44" evidence="1"/>
<dbReference type="EMBL" id="CP000252">
    <property type="protein sequence ID" value="ABC77073.1"/>
    <property type="molecule type" value="Genomic_DNA"/>
</dbReference>
<dbReference type="RefSeq" id="WP_011417102.1">
    <property type="nucleotide sequence ID" value="NC_007759.1"/>
</dbReference>
<dbReference type="SMR" id="Q2LSL3"/>
<dbReference type="FunCoup" id="Q2LSL3">
    <property type="interactions" value="299"/>
</dbReference>
<dbReference type="STRING" id="56780.SYN_00964"/>
<dbReference type="KEGG" id="sat:SYN_00964"/>
<dbReference type="eggNOG" id="COG2201">
    <property type="taxonomic scope" value="Bacteria"/>
</dbReference>
<dbReference type="HOGENOM" id="CLU_000445_51_0_7"/>
<dbReference type="InParanoid" id="Q2LSL3"/>
<dbReference type="OrthoDB" id="9793421at2"/>
<dbReference type="Proteomes" id="UP000001933">
    <property type="component" value="Chromosome"/>
</dbReference>
<dbReference type="GO" id="GO:0005737">
    <property type="term" value="C:cytoplasm"/>
    <property type="evidence" value="ECO:0007669"/>
    <property type="project" value="UniProtKB-SubCell"/>
</dbReference>
<dbReference type="GO" id="GO:0000156">
    <property type="term" value="F:phosphorelay response regulator activity"/>
    <property type="evidence" value="ECO:0007669"/>
    <property type="project" value="InterPro"/>
</dbReference>
<dbReference type="GO" id="GO:0008984">
    <property type="term" value="F:protein-glutamate methylesterase activity"/>
    <property type="evidence" value="ECO:0007669"/>
    <property type="project" value="UniProtKB-UniRule"/>
</dbReference>
<dbReference type="GO" id="GO:0050568">
    <property type="term" value="F:protein-glutamine glutaminase activity"/>
    <property type="evidence" value="ECO:0007669"/>
    <property type="project" value="UniProtKB-UniRule"/>
</dbReference>
<dbReference type="GO" id="GO:0006935">
    <property type="term" value="P:chemotaxis"/>
    <property type="evidence" value="ECO:0007669"/>
    <property type="project" value="UniProtKB-UniRule"/>
</dbReference>
<dbReference type="CDD" id="cd16432">
    <property type="entry name" value="CheB_Rec"/>
    <property type="match status" value="1"/>
</dbReference>
<dbReference type="CDD" id="cd17541">
    <property type="entry name" value="REC_CheB-like"/>
    <property type="match status" value="1"/>
</dbReference>
<dbReference type="Gene3D" id="3.40.50.2300">
    <property type="match status" value="1"/>
</dbReference>
<dbReference type="Gene3D" id="3.40.50.180">
    <property type="entry name" value="Methylesterase CheB, C-terminal domain"/>
    <property type="match status" value="1"/>
</dbReference>
<dbReference type="HAMAP" id="MF_00099">
    <property type="entry name" value="CheB_chemtxs"/>
    <property type="match status" value="1"/>
</dbReference>
<dbReference type="InterPro" id="IPR008248">
    <property type="entry name" value="CheB-like"/>
</dbReference>
<dbReference type="InterPro" id="IPR035909">
    <property type="entry name" value="CheB_C"/>
</dbReference>
<dbReference type="InterPro" id="IPR011006">
    <property type="entry name" value="CheY-like_superfamily"/>
</dbReference>
<dbReference type="InterPro" id="IPR000673">
    <property type="entry name" value="Sig_transdc_resp-reg_Me-estase"/>
</dbReference>
<dbReference type="InterPro" id="IPR001789">
    <property type="entry name" value="Sig_transdc_resp-reg_receiver"/>
</dbReference>
<dbReference type="NCBIfam" id="NF001965">
    <property type="entry name" value="PRK00742.1"/>
    <property type="match status" value="1"/>
</dbReference>
<dbReference type="NCBIfam" id="NF009206">
    <property type="entry name" value="PRK12555.1"/>
    <property type="match status" value="1"/>
</dbReference>
<dbReference type="PANTHER" id="PTHR42872">
    <property type="entry name" value="PROTEIN-GLUTAMATE METHYLESTERASE/PROTEIN-GLUTAMINE GLUTAMINASE"/>
    <property type="match status" value="1"/>
</dbReference>
<dbReference type="PANTHER" id="PTHR42872:SF6">
    <property type="entry name" value="PROTEIN-GLUTAMATE METHYLESTERASE_PROTEIN-GLUTAMINE GLUTAMINASE"/>
    <property type="match status" value="1"/>
</dbReference>
<dbReference type="Pfam" id="PF01339">
    <property type="entry name" value="CheB_methylest"/>
    <property type="match status" value="1"/>
</dbReference>
<dbReference type="Pfam" id="PF00072">
    <property type="entry name" value="Response_reg"/>
    <property type="match status" value="1"/>
</dbReference>
<dbReference type="PIRSF" id="PIRSF000876">
    <property type="entry name" value="RR_chemtxs_CheB"/>
    <property type="match status" value="1"/>
</dbReference>
<dbReference type="SMART" id="SM00448">
    <property type="entry name" value="REC"/>
    <property type="match status" value="1"/>
</dbReference>
<dbReference type="SUPFAM" id="SSF52172">
    <property type="entry name" value="CheY-like"/>
    <property type="match status" value="1"/>
</dbReference>
<dbReference type="SUPFAM" id="SSF52738">
    <property type="entry name" value="Methylesterase CheB, C-terminal domain"/>
    <property type="match status" value="1"/>
</dbReference>
<dbReference type="PROSITE" id="PS50122">
    <property type="entry name" value="CHEB"/>
    <property type="match status" value="1"/>
</dbReference>
<dbReference type="PROSITE" id="PS50110">
    <property type="entry name" value="RESPONSE_REGULATORY"/>
    <property type="match status" value="1"/>
</dbReference>
<evidence type="ECO:0000255" key="1">
    <source>
        <dbReference type="HAMAP-Rule" id="MF_00099"/>
    </source>
</evidence>
<keyword id="KW-0145">Chemotaxis</keyword>
<keyword id="KW-0963">Cytoplasm</keyword>
<keyword id="KW-0378">Hydrolase</keyword>
<keyword id="KW-0597">Phosphoprotein</keyword>
<keyword id="KW-1185">Reference proteome</keyword>
<name>CHEB2_SYNAS</name>
<organism>
    <name type="scientific">Syntrophus aciditrophicus (strain SB)</name>
    <dbReference type="NCBI Taxonomy" id="56780"/>
    <lineage>
        <taxon>Bacteria</taxon>
        <taxon>Pseudomonadati</taxon>
        <taxon>Thermodesulfobacteriota</taxon>
        <taxon>Syntrophia</taxon>
        <taxon>Syntrophales</taxon>
        <taxon>Syntrophaceae</taxon>
        <taxon>Syntrophus</taxon>
    </lineage>
</organism>
<protein>
    <recommendedName>
        <fullName evidence="1">Protein-glutamate methylesterase/protein-glutamine glutaminase 2</fullName>
        <ecNumber evidence="1">3.1.1.61</ecNumber>
        <ecNumber evidence="1">3.5.1.44</ecNumber>
    </recommendedName>
</protein>
<comment type="function">
    <text evidence="1">Involved in chemotaxis. Part of a chemotaxis signal transduction system that modulates chemotaxis in response to various stimuli. Catalyzes the demethylation of specific methylglutamate residues introduced into the chemoreceptors (methyl-accepting chemotaxis proteins or MCP) by CheR. Also mediates the irreversible deamidation of specific glutamine residues to glutamic acid.</text>
</comment>
<comment type="catalytic activity">
    <reaction evidence="1">
        <text>[protein]-L-glutamate 5-O-methyl ester + H2O = L-glutamyl-[protein] + methanol + H(+)</text>
        <dbReference type="Rhea" id="RHEA:23236"/>
        <dbReference type="Rhea" id="RHEA-COMP:10208"/>
        <dbReference type="Rhea" id="RHEA-COMP:10311"/>
        <dbReference type="ChEBI" id="CHEBI:15377"/>
        <dbReference type="ChEBI" id="CHEBI:15378"/>
        <dbReference type="ChEBI" id="CHEBI:17790"/>
        <dbReference type="ChEBI" id="CHEBI:29973"/>
        <dbReference type="ChEBI" id="CHEBI:82795"/>
        <dbReference type="EC" id="3.1.1.61"/>
    </reaction>
</comment>
<comment type="catalytic activity">
    <reaction evidence="1">
        <text>L-glutaminyl-[protein] + H2O = L-glutamyl-[protein] + NH4(+)</text>
        <dbReference type="Rhea" id="RHEA:16441"/>
        <dbReference type="Rhea" id="RHEA-COMP:10207"/>
        <dbReference type="Rhea" id="RHEA-COMP:10208"/>
        <dbReference type="ChEBI" id="CHEBI:15377"/>
        <dbReference type="ChEBI" id="CHEBI:28938"/>
        <dbReference type="ChEBI" id="CHEBI:29973"/>
        <dbReference type="ChEBI" id="CHEBI:30011"/>
        <dbReference type="EC" id="3.5.1.44"/>
    </reaction>
</comment>
<comment type="subcellular location">
    <subcellularLocation>
        <location evidence="1">Cytoplasm</location>
    </subcellularLocation>
</comment>
<comment type="domain">
    <text evidence="1">Contains a C-terminal catalytic domain, and an N-terminal region which modulates catalytic activity.</text>
</comment>
<comment type="PTM">
    <text evidence="1">Phosphorylated by CheA. Phosphorylation of the N-terminal regulatory domain activates the methylesterase activity.</text>
</comment>
<comment type="similarity">
    <text evidence="1">Belongs to the CheB family.</text>
</comment>
<accession>Q2LSL3</accession>
<proteinExistence type="inferred from homology"/>
<sequence>MSKIKVLVVDDSAIVRKIFTEELSKYPDIEVVGSAPDPFVARDKIVHLKPDVITLDIEMPRMDGLTFLKKLMRHYPLPAIIVSSLTPKGGKLTLEAMDIGAVDAIAKPGSSYSVGDMSGQLVEKIRAASGARVVRKSTQEMFQPGSRLSIRSLAETSNKVIAIGASTGGTEALKNVLSRMPPDSPGILVVQHMPANFTTAFAERLNSLCQIGVKEAADNDSVTPGTALIAPGNYHMILRRSGARYYVQIKMGPMVHHQRPAVDVLFKSTAKYAGANAIGVILTGMGADGAAGLLEMKQMGAGTIAQNEKSCIVYGMPKEAVKIGAVDKIVHLDSIADEIVRMV</sequence>
<reference key="1">
    <citation type="journal article" date="2007" name="Proc. Natl. Acad. Sci. U.S.A.">
        <title>The genome of Syntrophus aciditrophicus: life at the thermodynamic limit of microbial growth.</title>
        <authorList>
            <person name="McInerney M.J."/>
            <person name="Rohlin L."/>
            <person name="Mouttaki H."/>
            <person name="Kim U."/>
            <person name="Krupp R.S."/>
            <person name="Rios-Hernandez L."/>
            <person name="Sieber J."/>
            <person name="Struchtemeyer C.G."/>
            <person name="Bhattacharyya A."/>
            <person name="Campbell J.W."/>
            <person name="Gunsalus R.P."/>
        </authorList>
    </citation>
    <scope>NUCLEOTIDE SEQUENCE [LARGE SCALE GENOMIC DNA]</scope>
    <source>
        <strain>SB</strain>
    </source>
</reference>
<feature type="chain" id="PRO_0000264329" description="Protein-glutamate methylesterase/protein-glutamine glutaminase 2">
    <location>
        <begin position="1"/>
        <end position="343"/>
    </location>
</feature>
<feature type="domain" description="Response regulatory" evidence="1">
    <location>
        <begin position="5"/>
        <end position="122"/>
    </location>
</feature>
<feature type="domain" description="CheB-type methylesterase" evidence="1">
    <location>
        <begin position="154"/>
        <end position="343"/>
    </location>
</feature>
<feature type="active site" evidence="1">
    <location>
        <position position="166"/>
    </location>
</feature>
<feature type="active site" evidence="1">
    <location>
        <position position="192"/>
    </location>
</feature>
<feature type="active site" evidence="1">
    <location>
        <position position="288"/>
    </location>
</feature>
<feature type="modified residue" description="4-aspartylphosphate" evidence="1">
    <location>
        <position position="56"/>
    </location>
</feature>
<gene>
    <name evidence="1" type="primary">cheB2</name>
    <name type="ordered locus">SYNAS_11940</name>
    <name type="ORF">SYN_00964</name>
</gene>